<sequence length="970" mass="109710">MNSLPPRPSLDVLPEALRPDLIRLLDDFESACARDGIALDHWPEALVRVWAGSGFAARIAIRRPNLLLELIQDGTLARPLEAGEMAARVSAVVQAAQDEAALMRDLRLLRQREMMRIAWRDLSGEAGLDETLGDLTDLAEHCIDQAAAWVHGQLVQRHGEPRDAEGRPQRLVVLGMGKLGGRELNFSSDVDLIFTYAARGETDGEKPLDNQQFFIRLGQRLIRLLDENTAEGFVFRVDMRLRPFGDAGPLVMDFDTLEGYYESHGREWERYALIKARVVAGDREAGRELMRALRPFVFRRYLDYGAFAALRDMKAMINREAARRSRGDDVKLGEGGIREVEFIGQAFQLIRAGRDPRLQLRGIRPVLRRLAEMELMPGYVVDQLITAYEFLRRTENHLQMAQDQQTHRLPESDEARLRLAFSMGHDDWEGFSRELARHRRRVQEHFQQVFAAPQGEAEEAAGAEGPGQAVLASIWAGDRSGERAQAVLAEAGFRDAPKALEWIEDLREGAACRSLTATGRERLDQLMPLLLGAAAGAEDPDTVLSRLVTLVRSIARRSVYLSLLVESPMALSQLVKLCDASPWIAQLLTRHPLLLDELLDPRSLYAPMDREGLSAELDEELSQVPEDDMEQMMDRLRQFQQVQMLKVAAADIMGVLPLMKVSDHLTWIAEVVLERVLSLVMAQLHARYGRPRCLIDGRPYEPGFAIIGYGKLGGLELGYGSDLDIVFLHDSAGEQQMTDGDKALDNSEFFARLGQRIVHVLGTYTGAGRLYEVDTRLRPSGASGLLVSSLKAFELYQETKAWTWEHQALVRARPVAGDAHIAEGFAEIRRRVLGICRDREKLRQEVREMREKMWSEHASRDPSRFNLKRDPGGIADIEFMVQYWVLAYACDHPPLLDYPDNIRILERLVVTGVLPEEDARFLTDTYREFRNRIHRLTLQESDAVVDAAEFAEQRETVRALWRRVMEEGKA</sequence>
<reference key="1">
    <citation type="journal article" date="2011" name="Stand. Genomic Sci.">
        <title>Complete genome sequence of 'Thioalkalivibrio sulfidophilus' HL-EbGr7.</title>
        <authorList>
            <person name="Muyzer G."/>
            <person name="Sorokin D.Y."/>
            <person name="Mavromatis K."/>
            <person name="Lapidus A."/>
            <person name="Clum A."/>
            <person name="Ivanova N."/>
            <person name="Pati A."/>
            <person name="d'Haeseleer P."/>
            <person name="Woyke T."/>
            <person name="Kyrpides N.C."/>
        </authorList>
    </citation>
    <scope>NUCLEOTIDE SEQUENCE [LARGE SCALE GENOMIC DNA]</scope>
    <source>
        <strain>HL-EbGR7</strain>
    </source>
</reference>
<accession>B8GL43</accession>
<name>GLNE_THISH</name>
<evidence type="ECO:0000255" key="1">
    <source>
        <dbReference type="HAMAP-Rule" id="MF_00802"/>
    </source>
</evidence>
<protein>
    <recommendedName>
        <fullName evidence="1">Bifunctional glutamine synthetase adenylyltransferase/adenylyl-removing enzyme</fullName>
    </recommendedName>
    <alternativeName>
        <fullName evidence="1">ATP:glutamine synthetase adenylyltransferase</fullName>
    </alternativeName>
    <alternativeName>
        <fullName evidence="1">ATase</fullName>
    </alternativeName>
    <domain>
        <recommendedName>
            <fullName evidence="1">Glutamine synthetase adenylyl-L-tyrosine phosphorylase</fullName>
            <ecNumber evidence="1">2.7.7.89</ecNumber>
        </recommendedName>
        <alternativeName>
            <fullName evidence="1">Adenylyl removase</fullName>
            <shortName evidence="1">AR</shortName>
            <shortName evidence="1">AT-N</shortName>
        </alternativeName>
    </domain>
    <domain>
        <recommendedName>
            <fullName evidence="1">Glutamine synthetase adenylyl transferase</fullName>
            <ecNumber evidence="1">2.7.7.42</ecNumber>
        </recommendedName>
        <alternativeName>
            <fullName evidence="1">Adenylyl transferase</fullName>
            <shortName evidence="1">AT</shortName>
            <shortName evidence="1">AT-C</shortName>
        </alternativeName>
    </domain>
</protein>
<comment type="function">
    <text evidence="1">Involved in the regulation of glutamine synthetase GlnA, a key enzyme in the process to assimilate ammonia. When cellular nitrogen levels are high, the C-terminal adenylyl transferase (AT) inactivates GlnA by covalent transfer of an adenylyl group from ATP to specific tyrosine residue of GlnA, thus reducing its activity. Conversely, when nitrogen levels are low, the N-terminal adenylyl removase (AR) activates GlnA by removing the adenylyl group by phosphorolysis, increasing its activity. The regulatory region of GlnE binds the signal transduction protein PII (GlnB) which indicates the nitrogen status of the cell.</text>
</comment>
<comment type="catalytic activity">
    <reaction evidence="1">
        <text>[glutamine synthetase]-O(4)-(5'-adenylyl)-L-tyrosine + phosphate = [glutamine synthetase]-L-tyrosine + ADP</text>
        <dbReference type="Rhea" id="RHEA:43716"/>
        <dbReference type="Rhea" id="RHEA-COMP:10660"/>
        <dbReference type="Rhea" id="RHEA-COMP:10661"/>
        <dbReference type="ChEBI" id="CHEBI:43474"/>
        <dbReference type="ChEBI" id="CHEBI:46858"/>
        <dbReference type="ChEBI" id="CHEBI:83624"/>
        <dbReference type="ChEBI" id="CHEBI:456216"/>
        <dbReference type="EC" id="2.7.7.89"/>
    </reaction>
</comment>
<comment type="catalytic activity">
    <reaction evidence="1">
        <text>[glutamine synthetase]-L-tyrosine + ATP = [glutamine synthetase]-O(4)-(5'-adenylyl)-L-tyrosine + diphosphate</text>
        <dbReference type="Rhea" id="RHEA:18589"/>
        <dbReference type="Rhea" id="RHEA-COMP:10660"/>
        <dbReference type="Rhea" id="RHEA-COMP:10661"/>
        <dbReference type="ChEBI" id="CHEBI:30616"/>
        <dbReference type="ChEBI" id="CHEBI:33019"/>
        <dbReference type="ChEBI" id="CHEBI:46858"/>
        <dbReference type="ChEBI" id="CHEBI:83624"/>
        <dbReference type="EC" id="2.7.7.42"/>
    </reaction>
</comment>
<comment type="cofactor">
    <cofactor evidence="1">
        <name>Mg(2+)</name>
        <dbReference type="ChEBI" id="CHEBI:18420"/>
    </cofactor>
</comment>
<comment type="similarity">
    <text evidence="1">Belongs to the GlnE family.</text>
</comment>
<proteinExistence type="inferred from homology"/>
<gene>
    <name evidence="1" type="primary">glnE</name>
    <name type="ordered locus">Tgr7_0463</name>
</gene>
<organism>
    <name type="scientific">Thioalkalivibrio sulfidiphilus (strain HL-EbGR7)</name>
    <dbReference type="NCBI Taxonomy" id="396588"/>
    <lineage>
        <taxon>Bacteria</taxon>
        <taxon>Pseudomonadati</taxon>
        <taxon>Pseudomonadota</taxon>
        <taxon>Gammaproteobacteria</taxon>
        <taxon>Chromatiales</taxon>
        <taxon>Ectothiorhodospiraceae</taxon>
        <taxon>Thioalkalivibrio</taxon>
    </lineage>
</organism>
<feature type="chain" id="PRO_1000148546" description="Bifunctional glutamine synthetase adenylyltransferase/adenylyl-removing enzyme">
    <location>
        <begin position="1"/>
        <end position="970"/>
    </location>
</feature>
<feature type="region of interest" description="Adenylyl removase" evidence="1">
    <location>
        <begin position="1"/>
        <end position="454"/>
    </location>
</feature>
<feature type="region of interest" description="Adenylyl transferase" evidence="1">
    <location>
        <begin position="468"/>
        <end position="970"/>
    </location>
</feature>
<keyword id="KW-0067">ATP-binding</keyword>
<keyword id="KW-0460">Magnesium</keyword>
<keyword id="KW-0511">Multifunctional enzyme</keyword>
<keyword id="KW-0547">Nucleotide-binding</keyword>
<keyword id="KW-0548">Nucleotidyltransferase</keyword>
<keyword id="KW-1185">Reference proteome</keyword>
<keyword id="KW-0808">Transferase</keyword>
<dbReference type="EC" id="2.7.7.89" evidence="1"/>
<dbReference type="EC" id="2.7.7.42" evidence="1"/>
<dbReference type="EMBL" id="CP001339">
    <property type="protein sequence ID" value="ACL71561.1"/>
    <property type="molecule type" value="Genomic_DNA"/>
</dbReference>
<dbReference type="RefSeq" id="WP_012637050.1">
    <property type="nucleotide sequence ID" value="NC_011901.1"/>
</dbReference>
<dbReference type="SMR" id="B8GL43"/>
<dbReference type="STRING" id="396588.Tgr7_0463"/>
<dbReference type="KEGG" id="tgr:Tgr7_0463"/>
<dbReference type="eggNOG" id="COG1391">
    <property type="taxonomic scope" value="Bacteria"/>
</dbReference>
<dbReference type="HOGENOM" id="CLU_006233_0_1_6"/>
<dbReference type="OrthoDB" id="9759366at2"/>
<dbReference type="Proteomes" id="UP000002383">
    <property type="component" value="Chromosome"/>
</dbReference>
<dbReference type="GO" id="GO:0005829">
    <property type="term" value="C:cytosol"/>
    <property type="evidence" value="ECO:0007669"/>
    <property type="project" value="TreeGrafter"/>
</dbReference>
<dbReference type="GO" id="GO:0008882">
    <property type="term" value="F:[glutamate-ammonia-ligase] adenylyltransferase activity"/>
    <property type="evidence" value="ECO:0007669"/>
    <property type="project" value="UniProtKB-UniRule"/>
</dbReference>
<dbReference type="GO" id="GO:0047388">
    <property type="term" value="F:[glutamine synthetase]-adenylyl-L-tyrosine phosphorylase activity"/>
    <property type="evidence" value="ECO:0007669"/>
    <property type="project" value="UniProtKB-EC"/>
</dbReference>
<dbReference type="GO" id="GO:0005524">
    <property type="term" value="F:ATP binding"/>
    <property type="evidence" value="ECO:0007669"/>
    <property type="project" value="UniProtKB-UniRule"/>
</dbReference>
<dbReference type="GO" id="GO:0000287">
    <property type="term" value="F:magnesium ion binding"/>
    <property type="evidence" value="ECO:0007669"/>
    <property type="project" value="UniProtKB-UniRule"/>
</dbReference>
<dbReference type="GO" id="GO:0000820">
    <property type="term" value="P:regulation of glutamine family amino acid metabolic process"/>
    <property type="evidence" value="ECO:0007669"/>
    <property type="project" value="UniProtKB-UniRule"/>
</dbReference>
<dbReference type="CDD" id="cd05401">
    <property type="entry name" value="NT_GlnE_GlnD_like"/>
    <property type="match status" value="2"/>
</dbReference>
<dbReference type="FunFam" id="1.20.120.330:FF:000005">
    <property type="entry name" value="Bifunctional glutamine synthetase adenylyltransferase/adenylyl-removing enzyme"/>
    <property type="match status" value="1"/>
</dbReference>
<dbReference type="FunFam" id="3.30.460.10:FF:000009">
    <property type="entry name" value="Bifunctional glutamine synthetase adenylyltransferase/adenylyl-removing enzyme"/>
    <property type="match status" value="2"/>
</dbReference>
<dbReference type="Gene3D" id="1.20.120.1510">
    <property type="match status" value="1"/>
</dbReference>
<dbReference type="Gene3D" id="3.30.460.10">
    <property type="entry name" value="Beta Polymerase, domain 2"/>
    <property type="match status" value="2"/>
</dbReference>
<dbReference type="Gene3D" id="1.20.120.330">
    <property type="entry name" value="Nucleotidyltransferases domain 2"/>
    <property type="match status" value="2"/>
</dbReference>
<dbReference type="HAMAP" id="MF_00802">
    <property type="entry name" value="GlnE"/>
    <property type="match status" value="1"/>
</dbReference>
<dbReference type="InterPro" id="IPR023057">
    <property type="entry name" value="GlnE"/>
</dbReference>
<dbReference type="InterPro" id="IPR005190">
    <property type="entry name" value="GlnE_rpt_dom"/>
</dbReference>
<dbReference type="InterPro" id="IPR043519">
    <property type="entry name" value="NT_sf"/>
</dbReference>
<dbReference type="InterPro" id="IPR013546">
    <property type="entry name" value="PII_UdlTrfase/GS_AdlTrfase"/>
</dbReference>
<dbReference type="NCBIfam" id="NF008292">
    <property type="entry name" value="PRK11072.1"/>
    <property type="match status" value="1"/>
</dbReference>
<dbReference type="PANTHER" id="PTHR30621:SF0">
    <property type="entry name" value="BIFUNCTIONAL GLUTAMINE SYNTHETASE ADENYLYLTRANSFERASE_ADENYLYL-REMOVING ENZYME"/>
    <property type="match status" value="1"/>
</dbReference>
<dbReference type="PANTHER" id="PTHR30621">
    <property type="entry name" value="GLUTAMINE SYNTHETASE ADENYLYLTRANSFERASE"/>
    <property type="match status" value="1"/>
</dbReference>
<dbReference type="Pfam" id="PF08335">
    <property type="entry name" value="GlnD_UR_UTase"/>
    <property type="match status" value="2"/>
</dbReference>
<dbReference type="Pfam" id="PF03710">
    <property type="entry name" value="GlnE"/>
    <property type="match status" value="2"/>
</dbReference>
<dbReference type="SUPFAM" id="SSF81301">
    <property type="entry name" value="Nucleotidyltransferase"/>
    <property type="match status" value="2"/>
</dbReference>
<dbReference type="SUPFAM" id="SSF81593">
    <property type="entry name" value="Nucleotidyltransferase substrate binding subunit/domain"/>
    <property type="match status" value="2"/>
</dbReference>